<gene>
    <name type="primary">gkap1-b</name>
</gene>
<feature type="chain" id="PRO_0000315659" description="G kinase-anchoring protein 1-B">
    <location>
        <begin position="1"/>
        <end position="363"/>
    </location>
</feature>
<feature type="region of interest" description="Disordered" evidence="3">
    <location>
        <begin position="17"/>
        <end position="79"/>
    </location>
</feature>
<feature type="region of interest" description="Disordered" evidence="3">
    <location>
        <begin position="147"/>
        <end position="182"/>
    </location>
</feature>
<feature type="coiled-coil region" evidence="2">
    <location>
        <begin position="50"/>
        <end position="79"/>
    </location>
</feature>
<feature type="coiled-coil region" evidence="2">
    <location>
        <begin position="249"/>
        <end position="298"/>
    </location>
</feature>
<feature type="coiled-coil region" evidence="2">
    <location>
        <begin position="328"/>
        <end position="348"/>
    </location>
</feature>
<feature type="compositionally biased region" description="Basic residues" evidence="3">
    <location>
        <begin position="160"/>
        <end position="170"/>
    </location>
</feature>
<sequence>MASAVVSMVSTTASRFALLKVDSSSDSDSEKARGTHTSGKAHSGSAARGKTNVNEKKKEKRRKKKEQQQSEANELRNLAFKKIPPKASLGVSAAVQEHITHTVPKDAQKEDWQQWQQRDKQLTSDMFEADLEKALILSKLEYEESKVNGDGVNGVPQSKKVNKKDKRKNNQGKDKPLTVPLKDFQLEDQQAKKQEELKSPALPQGSGFFNKVEDDVTKIILNEKRKEHSTDVTESFATPEYSTEPALKDGKTEVLKQEIEKKEIALQQMRSKISQWEAKYREVKARNSQLLKMLQEGEMKDKAEILLQVDELLSIKNELTLQVTTLHAALEQERSKVKVLQAEQVRYQGGKKSKRNPELEHGR</sequence>
<proteinExistence type="evidence at transcript level"/>
<accession>Q8AVX1</accession>
<dbReference type="EMBL" id="BC041228">
    <property type="protein sequence ID" value="AAH41228.1"/>
    <property type="molecule type" value="mRNA"/>
</dbReference>
<dbReference type="RefSeq" id="NP_001080098.1">
    <property type="nucleotide sequence ID" value="NM_001086629.1"/>
</dbReference>
<dbReference type="SMR" id="Q8AVX1"/>
<dbReference type="DNASU" id="379790"/>
<dbReference type="GeneID" id="379790"/>
<dbReference type="KEGG" id="xla:379790"/>
<dbReference type="AGR" id="Xenbase:XB-GENE-6254940"/>
<dbReference type="CTD" id="379790"/>
<dbReference type="Xenbase" id="XB-GENE-6254940">
    <property type="gene designation" value="gkap1.S"/>
</dbReference>
<dbReference type="OrthoDB" id="5864420at2759"/>
<dbReference type="Proteomes" id="UP000186698">
    <property type="component" value="Chromosome 1S"/>
</dbReference>
<dbReference type="Bgee" id="379790">
    <property type="expression patterns" value="Expressed in muscle tissue and 19 other cell types or tissues"/>
</dbReference>
<dbReference type="GO" id="GO:0005794">
    <property type="term" value="C:Golgi apparatus"/>
    <property type="evidence" value="ECO:0007669"/>
    <property type="project" value="UniProtKB-SubCell"/>
</dbReference>
<dbReference type="GO" id="GO:0007165">
    <property type="term" value="P:signal transduction"/>
    <property type="evidence" value="ECO:0000318"/>
    <property type="project" value="GO_Central"/>
</dbReference>
<dbReference type="InterPro" id="IPR026109">
    <property type="entry name" value="GKAP1"/>
</dbReference>
<dbReference type="PANTHER" id="PTHR14899">
    <property type="entry name" value="G KINASE ANCHORING PROTEIN 1"/>
    <property type="match status" value="1"/>
</dbReference>
<dbReference type="PANTHER" id="PTHR14899:SF0">
    <property type="entry name" value="G KINASE-ANCHORING PROTEIN 1"/>
    <property type="match status" value="1"/>
</dbReference>
<dbReference type="PRINTS" id="PR02083">
    <property type="entry name" value="GKINASEAP1"/>
</dbReference>
<reference key="1">
    <citation type="submission" date="2002-12" db="EMBL/GenBank/DDBJ databases">
        <authorList>
            <consortium name="NIH - Xenopus Gene Collection (XGC) project"/>
        </authorList>
    </citation>
    <scope>NUCLEOTIDE SEQUENCE [LARGE SCALE MRNA]</scope>
    <source>
        <tissue>Embryo</tissue>
    </source>
</reference>
<protein>
    <recommendedName>
        <fullName>G kinase-anchoring protein 1-B</fullName>
    </recommendedName>
</protein>
<evidence type="ECO:0000250" key="1">
    <source>
        <dbReference type="UniProtKB" id="Q9JMB0"/>
    </source>
</evidence>
<evidence type="ECO:0000255" key="2"/>
<evidence type="ECO:0000256" key="3">
    <source>
        <dbReference type="SAM" id="MobiDB-lite"/>
    </source>
</evidence>
<evidence type="ECO:0000305" key="4"/>
<comment type="function">
    <text evidence="1">May play a role in the regulation of insulin-dependent IRS1 tyrosine phosphorylation in adipocytes.</text>
</comment>
<comment type="subcellular location">
    <subcellularLocation>
        <location evidence="1">Golgi apparatus</location>
    </subcellularLocation>
</comment>
<comment type="similarity">
    <text evidence="4">Belongs to the GKAP1 family.</text>
</comment>
<name>GKP1B_XENLA</name>
<keyword id="KW-0175">Coiled coil</keyword>
<keyword id="KW-0333">Golgi apparatus</keyword>
<keyword id="KW-1185">Reference proteome</keyword>
<organism>
    <name type="scientific">Xenopus laevis</name>
    <name type="common">African clawed frog</name>
    <dbReference type="NCBI Taxonomy" id="8355"/>
    <lineage>
        <taxon>Eukaryota</taxon>
        <taxon>Metazoa</taxon>
        <taxon>Chordata</taxon>
        <taxon>Craniata</taxon>
        <taxon>Vertebrata</taxon>
        <taxon>Euteleostomi</taxon>
        <taxon>Amphibia</taxon>
        <taxon>Batrachia</taxon>
        <taxon>Anura</taxon>
        <taxon>Pipoidea</taxon>
        <taxon>Pipidae</taxon>
        <taxon>Xenopodinae</taxon>
        <taxon>Xenopus</taxon>
        <taxon>Xenopus</taxon>
    </lineage>
</organism>